<keyword id="KW-0966">Cell projection</keyword>
<keyword id="KW-0963">Cytoplasm</keyword>
<keyword id="KW-0206">Cytoskeleton</keyword>
<keyword id="KW-1185">Reference proteome</keyword>
<keyword id="KW-0677">Repeat</keyword>
<keyword id="KW-0802">TPR repeat</keyword>
<organism>
    <name type="scientific">Danio rerio</name>
    <name type="common">Zebrafish</name>
    <name type="synonym">Brachydanio rerio</name>
    <dbReference type="NCBI Taxonomy" id="7955"/>
    <lineage>
        <taxon>Eukaryota</taxon>
        <taxon>Metazoa</taxon>
        <taxon>Chordata</taxon>
        <taxon>Craniata</taxon>
        <taxon>Vertebrata</taxon>
        <taxon>Euteleostomi</taxon>
        <taxon>Actinopterygii</taxon>
        <taxon>Neopterygii</taxon>
        <taxon>Teleostei</taxon>
        <taxon>Ostariophysi</taxon>
        <taxon>Cypriniformes</taxon>
        <taxon>Danionidae</taxon>
        <taxon>Danioninae</taxon>
        <taxon>Danio</taxon>
    </lineage>
</organism>
<protein>
    <recommendedName>
        <fullName>Outer dynein arm-docking complex subunit 4</fullName>
    </recommendedName>
    <alternativeName>
        <fullName>Tetratricopeptide repeat protein 25</fullName>
        <shortName>TPR repeat protein 25</shortName>
    </alternativeName>
</protein>
<gene>
    <name type="primary">odad4</name>
    <name type="synonym">ttc25</name>
</gene>
<reference key="1">
    <citation type="journal article" date="2013" name="Nature">
        <title>The zebrafish reference genome sequence and its relationship to the human genome.</title>
        <authorList>
            <person name="Howe K."/>
            <person name="Clark M.D."/>
            <person name="Torroja C.F."/>
            <person name="Torrance J."/>
            <person name="Berthelot C."/>
            <person name="Muffato M."/>
            <person name="Collins J.E."/>
            <person name="Humphray S."/>
            <person name="McLaren K."/>
            <person name="Matthews L."/>
            <person name="McLaren S."/>
            <person name="Sealy I."/>
            <person name="Caccamo M."/>
            <person name="Churcher C."/>
            <person name="Scott C."/>
            <person name="Barrett J.C."/>
            <person name="Koch R."/>
            <person name="Rauch G.J."/>
            <person name="White S."/>
            <person name="Chow W."/>
            <person name="Kilian B."/>
            <person name="Quintais L.T."/>
            <person name="Guerra-Assuncao J.A."/>
            <person name="Zhou Y."/>
            <person name="Gu Y."/>
            <person name="Yen J."/>
            <person name="Vogel J.H."/>
            <person name="Eyre T."/>
            <person name="Redmond S."/>
            <person name="Banerjee R."/>
            <person name="Chi J."/>
            <person name="Fu B."/>
            <person name="Langley E."/>
            <person name="Maguire S.F."/>
            <person name="Laird G.K."/>
            <person name="Lloyd D."/>
            <person name="Kenyon E."/>
            <person name="Donaldson S."/>
            <person name="Sehra H."/>
            <person name="Almeida-King J."/>
            <person name="Loveland J."/>
            <person name="Trevanion S."/>
            <person name="Jones M."/>
            <person name="Quail M."/>
            <person name="Willey D."/>
            <person name="Hunt A."/>
            <person name="Burton J."/>
            <person name="Sims S."/>
            <person name="McLay K."/>
            <person name="Plumb B."/>
            <person name="Davis J."/>
            <person name="Clee C."/>
            <person name="Oliver K."/>
            <person name="Clark R."/>
            <person name="Riddle C."/>
            <person name="Elliot D."/>
            <person name="Threadgold G."/>
            <person name="Harden G."/>
            <person name="Ware D."/>
            <person name="Begum S."/>
            <person name="Mortimore B."/>
            <person name="Kerry G."/>
            <person name="Heath P."/>
            <person name="Phillimore B."/>
            <person name="Tracey A."/>
            <person name="Corby N."/>
            <person name="Dunn M."/>
            <person name="Johnson C."/>
            <person name="Wood J."/>
            <person name="Clark S."/>
            <person name="Pelan S."/>
            <person name="Griffiths G."/>
            <person name="Smith M."/>
            <person name="Glithero R."/>
            <person name="Howden P."/>
            <person name="Barker N."/>
            <person name="Lloyd C."/>
            <person name="Stevens C."/>
            <person name="Harley J."/>
            <person name="Holt K."/>
            <person name="Panagiotidis G."/>
            <person name="Lovell J."/>
            <person name="Beasley H."/>
            <person name="Henderson C."/>
            <person name="Gordon D."/>
            <person name="Auger K."/>
            <person name="Wright D."/>
            <person name="Collins J."/>
            <person name="Raisen C."/>
            <person name="Dyer L."/>
            <person name="Leung K."/>
            <person name="Robertson L."/>
            <person name="Ambridge K."/>
            <person name="Leongamornlert D."/>
            <person name="McGuire S."/>
            <person name="Gilderthorp R."/>
            <person name="Griffiths C."/>
            <person name="Manthravadi D."/>
            <person name="Nichol S."/>
            <person name="Barker G."/>
            <person name="Whitehead S."/>
            <person name="Kay M."/>
            <person name="Brown J."/>
            <person name="Murnane C."/>
            <person name="Gray E."/>
            <person name="Humphries M."/>
            <person name="Sycamore N."/>
            <person name="Barker D."/>
            <person name="Saunders D."/>
            <person name="Wallis J."/>
            <person name="Babbage A."/>
            <person name="Hammond S."/>
            <person name="Mashreghi-Mohammadi M."/>
            <person name="Barr L."/>
            <person name="Martin S."/>
            <person name="Wray P."/>
            <person name="Ellington A."/>
            <person name="Matthews N."/>
            <person name="Ellwood M."/>
            <person name="Woodmansey R."/>
            <person name="Clark G."/>
            <person name="Cooper J."/>
            <person name="Tromans A."/>
            <person name="Grafham D."/>
            <person name="Skuce C."/>
            <person name="Pandian R."/>
            <person name="Andrews R."/>
            <person name="Harrison E."/>
            <person name="Kimberley A."/>
            <person name="Garnett J."/>
            <person name="Fosker N."/>
            <person name="Hall R."/>
            <person name="Garner P."/>
            <person name="Kelly D."/>
            <person name="Bird C."/>
            <person name="Palmer S."/>
            <person name="Gehring I."/>
            <person name="Berger A."/>
            <person name="Dooley C.M."/>
            <person name="Ersan-Urun Z."/>
            <person name="Eser C."/>
            <person name="Geiger H."/>
            <person name="Geisler M."/>
            <person name="Karotki L."/>
            <person name="Kirn A."/>
            <person name="Konantz J."/>
            <person name="Konantz M."/>
            <person name="Oberlander M."/>
            <person name="Rudolph-Geiger S."/>
            <person name="Teucke M."/>
            <person name="Lanz C."/>
            <person name="Raddatz G."/>
            <person name="Osoegawa K."/>
            <person name="Zhu B."/>
            <person name="Rapp A."/>
            <person name="Widaa S."/>
            <person name="Langford C."/>
            <person name="Yang F."/>
            <person name="Schuster S.C."/>
            <person name="Carter N.P."/>
            <person name="Harrow J."/>
            <person name="Ning Z."/>
            <person name="Herrero J."/>
            <person name="Searle S.M."/>
            <person name="Enright A."/>
            <person name="Geisler R."/>
            <person name="Plasterk R.H."/>
            <person name="Lee C."/>
            <person name="Westerfield M."/>
            <person name="de Jong P.J."/>
            <person name="Zon L.I."/>
            <person name="Postlethwait J.H."/>
            <person name="Nusslein-Volhard C."/>
            <person name="Hubbard T.J."/>
            <person name="Roest Crollius H."/>
            <person name="Rogers J."/>
            <person name="Stemple D.L."/>
        </authorList>
    </citation>
    <scope>NUCLEOTIDE SEQUENCE [LARGE SCALE GENOMIC DNA]</scope>
    <source>
        <strain>Tuebingen</strain>
    </source>
</reference>
<reference key="2">
    <citation type="submission" date="2003-04" db="EMBL/GenBank/DDBJ databases">
        <authorList>
            <consortium name="NIH - Zebrafish Gene Collection (ZGC) project"/>
        </authorList>
    </citation>
    <scope>NUCLEOTIDE SEQUENCE [LARGE SCALE MRNA]</scope>
</reference>
<reference key="3">
    <citation type="journal article" date="2015" name="PLoS ONE">
        <title>Characterization of tetratricopeptide repeat-containing proteins critical for cilia formation and function.</title>
        <authorList>
            <person name="Xu Y."/>
            <person name="Cao J."/>
            <person name="Huang S."/>
            <person name="Feng D."/>
            <person name="Zhang W."/>
            <person name="Zhu X."/>
            <person name="Yan X."/>
        </authorList>
    </citation>
    <scope>DISRUPTION PHENOTYPE</scope>
</reference>
<proteinExistence type="evidence at transcript level"/>
<comment type="function">
    <text evidence="1">Component of the outer dynein arm-docking complex (ODA-DC) that mediates outer dynein arms (ODA) binding onto the doublet microtubule. Plays an essential role for the assembly of ODA-DC and in the docking of ODA in ciliary axoneme.</text>
</comment>
<comment type="subunit">
    <text evidence="1">Component of the outer dynein arm-docking complex along with ODAD1, ODAD2 and ODAD3.</text>
</comment>
<comment type="subcellular location">
    <subcellularLocation>
        <location evidence="1">Cytoplasm</location>
        <location evidence="1">Cytoskeleton</location>
        <location evidence="1">Cilium axoneme</location>
    </subcellularLocation>
</comment>
<comment type="disruption phenotype">
    <text evidence="4">Morpholino knockdown of the protein causes severe curvature of the body at 72 hpf. Morphants also exhibit hydrocephalus, abnormal otoliths and disturbed left-right asymmetry patterning. Some animals (17%) tend to develop pronephric cysts. At the 7-somite stage, cilia number and length are reduced in the Kupffer's vesicle. At 60 hpf, cilia motility is markedly impaired in the pronephric duct.</text>
</comment>
<accession>Q7ZU45</accession>
<accession>F1RBQ8</accession>
<feature type="chain" id="PRO_0000284509" description="Outer dynein arm-docking complex subunit 4">
    <location>
        <begin position="1"/>
        <end position="486"/>
    </location>
</feature>
<feature type="repeat" description="TPR 1" evidence="2">
    <location>
        <begin position="14"/>
        <end position="47"/>
    </location>
</feature>
<feature type="repeat" description="TPR 2" evidence="2">
    <location>
        <begin position="49"/>
        <end position="81"/>
    </location>
</feature>
<feature type="repeat" description="TPR 3" evidence="2">
    <location>
        <begin position="82"/>
        <end position="115"/>
    </location>
</feature>
<feature type="repeat" description="TPR 4" evidence="2">
    <location>
        <begin position="314"/>
        <end position="347"/>
    </location>
</feature>
<feature type="repeat" description="TPR 5" evidence="2">
    <location>
        <begin position="354"/>
        <end position="387"/>
    </location>
</feature>
<feature type="repeat" description="TPR 6" evidence="2">
    <location>
        <begin position="391"/>
        <end position="424"/>
    </location>
</feature>
<feature type="repeat" description="TPR 7" evidence="2">
    <location>
        <begin position="431"/>
        <end position="464"/>
    </location>
</feature>
<feature type="region of interest" description="Disordered" evidence="3">
    <location>
        <begin position="153"/>
        <end position="180"/>
    </location>
</feature>
<feature type="sequence conflict" description="In Ref. 2; AAH51126." ref="2">
    <original>D</original>
    <variation>N</variation>
    <location>
        <position position="47"/>
    </location>
</feature>
<feature type="sequence conflict" description="In Ref. 2; AAH51126." ref="2">
    <original>C</original>
    <variation>R</variation>
    <location>
        <position position="478"/>
    </location>
</feature>
<evidence type="ECO:0000250" key="1">
    <source>
        <dbReference type="UniProtKB" id="Q96NG3"/>
    </source>
</evidence>
<evidence type="ECO:0000255" key="2"/>
<evidence type="ECO:0000256" key="3">
    <source>
        <dbReference type="SAM" id="MobiDB-lite"/>
    </source>
</evidence>
<evidence type="ECO:0000269" key="4">
    <source>
    </source>
</evidence>
<sequence length="486" mass="55528">MFDNEEGQGPKSTFTTYMAEGDQLFQRGEYVKAVESFTTALTLQPDDKNCLVSRSRCYVKLGDAENALKDAESSLKDNKNYFKGLYQKAEALYTMGDFEFALVYYHRGHKLRPELQEFRLGIQKAQEAIDNSVGSPSSVKLVNKGDLSFFHNGVHPQNLNPSNKKESKKHSKKTDKGEKTAKQLLGELYSDREYLKKLLQDEDLVKCKIRSGERVQDLIVGSISYLDTRMAFWQQQKPIYARQRDRKLMQQQWSKVLHKPPSDPTRYVLSSLEEIDTALSAGYTESGLNKARELMKVVKDWSEDALPNKNEVLGNLHSYIGNALMDLGNMDRALHHHEKDLELAKKCDLTDSKSRALDNIGRVYARIGKFQQAIEVWEKKLPLACGGLEKAWLFHEIGRCYLELKRYMEARDYGSRSLMAADDISDEKWQLNASVLMAQAELKLSNYKASVLHFERALERAKLLQDDSASEAIQKALCEARLRVTQ</sequence>
<name>ODAD4_DANRE</name>
<dbReference type="EMBL" id="BX901973">
    <property type="status" value="NOT_ANNOTATED_CDS"/>
    <property type="molecule type" value="Genomic_DNA"/>
</dbReference>
<dbReference type="EMBL" id="BC051126">
    <property type="protein sequence ID" value="AAH51126.1"/>
    <property type="molecule type" value="mRNA"/>
</dbReference>
<dbReference type="RefSeq" id="NP_956610.1">
    <property type="nucleotide sequence ID" value="NM_200316.1"/>
</dbReference>
<dbReference type="SMR" id="Q7ZU45"/>
<dbReference type="FunCoup" id="Q7ZU45">
    <property type="interactions" value="446"/>
</dbReference>
<dbReference type="STRING" id="7955.ENSDARP00000075390"/>
<dbReference type="PaxDb" id="7955-ENSDARP00000075390"/>
<dbReference type="Ensembl" id="ENSDART00000080946">
    <property type="protein sequence ID" value="ENSDARP00000075390"/>
    <property type="gene ID" value="ENSDARG00000058140"/>
</dbReference>
<dbReference type="GeneID" id="393286"/>
<dbReference type="KEGG" id="dre:393286"/>
<dbReference type="AGR" id="ZFIN:ZDB-GENE-040426-995"/>
<dbReference type="CTD" id="83538"/>
<dbReference type="ZFIN" id="ZDB-GENE-040426-995">
    <property type="gene designation" value="odad4"/>
</dbReference>
<dbReference type="eggNOG" id="KOG1124">
    <property type="taxonomic scope" value="Eukaryota"/>
</dbReference>
<dbReference type="HOGENOM" id="CLU_023648_2_0_1"/>
<dbReference type="InParanoid" id="Q7ZU45"/>
<dbReference type="OMA" id="VMPGCKP"/>
<dbReference type="OrthoDB" id="10268002at2759"/>
<dbReference type="PhylomeDB" id="Q7ZU45"/>
<dbReference type="TreeFam" id="TF323661"/>
<dbReference type="PRO" id="PR:Q7ZU45"/>
<dbReference type="Proteomes" id="UP000000437">
    <property type="component" value="Chromosome 3"/>
</dbReference>
<dbReference type="Bgee" id="ENSDARG00000058140">
    <property type="expression patterns" value="Expressed in testis and 28 other cell types or tissues"/>
</dbReference>
<dbReference type="GO" id="GO:0042995">
    <property type="term" value="C:cell projection"/>
    <property type="evidence" value="ECO:0007669"/>
    <property type="project" value="UniProtKB-KW"/>
</dbReference>
<dbReference type="GO" id="GO:0005737">
    <property type="term" value="C:cytoplasm"/>
    <property type="evidence" value="ECO:0000318"/>
    <property type="project" value="GO_Central"/>
</dbReference>
<dbReference type="GO" id="GO:0005856">
    <property type="term" value="C:cytoskeleton"/>
    <property type="evidence" value="ECO:0007669"/>
    <property type="project" value="UniProtKB-KW"/>
</dbReference>
<dbReference type="GO" id="GO:0060271">
    <property type="term" value="P:cilium assembly"/>
    <property type="evidence" value="ECO:0000315"/>
    <property type="project" value="ZFIN"/>
</dbReference>
<dbReference type="GO" id="GO:0003341">
    <property type="term" value="P:cilium movement"/>
    <property type="evidence" value="ECO:0000250"/>
    <property type="project" value="UniProtKB"/>
</dbReference>
<dbReference type="GO" id="GO:0061371">
    <property type="term" value="P:determination of heart left/right asymmetry"/>
    <property type="evidence" value="ECO:0000315"/>
    <property type="project" value="ZFIN"/>
</dbReference>
<dbReference type="GO" id="GO:0032474">
    <property type="term" value="P:otolith morphogenesis"/>
    <property type="evidence" value="ECO:0000315"/>
    <property type="project" value="ZFIN"/>
</dbReference>
<dbReference type="GO" id="GO:0036158">
    <property type="term" value="P:outer dynein arm assembly"/>
    <property type="evidence" value="ECO:0000250"/>
    <property type="project" value="UniProtKB"/>
</dbReference>
<dbReference type="FunFam" id="1.25.40.10:FF:000537">
    <property type="entry name" value="Tetratricopeptide repeat domain 25"/>
    <property type="match status" value="1"/>
</dbReference>
<dbReference type="FunFam" id="1.25.40.10:FF:000795">
    <property type="entry name" value="Tetratricopeptide repeat protein 25"/>
    <property type="match status" value="1"/>
</dbReference>
<dbReference type="Gene3D" id="1.25.40.10">
    <property type="entry name" value="Tetratricopeptide repeat domain"/>
    <property type="match status" value="2"/>
</dbReference>
<dbReference type="InterPro" id="IPR040111">
    <property type="entry name" value="ODAD4"/>
</dbReference>
<dbReference type="InterPro" id="IPR011990">
    <property type="entry name" value="TPR-like_helical_dom_sf"/>
</dbReference>
<dbReference type="InterPro" id="IPR019734">
    <property type="entry name" value="TPR_rpt"/>
</dbReference>
<dbReference type="PANTHER" id="PTHR23040">
    <property type="match status" value="1"/>
</dbReference>
<dbReference type="PANTHER" id="PTHR23040:SF1">
    <property type="entry name" value="OUTER DYNEIN ARM-DOCKING COMPLEX SUBUNIT 4"/>
    <property type="match status" value="1"/>
</dbReference>
<dbReference type="Pfam" id="PF13424">
    <property type="entry name" value="TPR_12"/>
    <property type="match status" value="1"/>
</dbReference>
<dbReference type="Pfam" id="PF13432">
    <property type="entry name" value="TPR_16"/>
    <property type="match status" value="1"/>
</dbReference>
<dbReference type="SMART" id="SM00028">
    <property type="entry name" value="TPR"/>
    <property type="match status" value="6"/>
</dbReference>
<dbReference type="SUPFAM" id="SSF48452">
    <property type="entry name" value="TPR-like"/>
    <property type="match status" value="2"/>
</dbReference>
<dbReference type="PROSITE" id="PS50005">
    <property type="entry name" value="TPR"/>
    <property type="match status" value="7"/>
</dbReference>
<dbReference type="PROSITE" id="PS50293">
    <property type="entry name" value="TPR_REGION"/>
    <property type="match status" value="2"/>
</dbReference>